<protein>
    <recommendedName>
        <fullName evidence="1">Small ribosomal subunit protein uS3</fullName>
    </recommendedName>
    <alternativeName>
        <fullName evidence="3">30S ribosomal protein S3</fullName>
    </alternativeName>
</protein>
<proteinExistence type="inferred from homology"/>
<feature type="chain" id="PRO_0000293742" description="Small ribosomal subunit protein uS3">
    <location>
        <begin position="1"/>
        <end position="250"/>
    </location>
</feature>
<feature type="domain" description="KH type-2" evidence="1">
    <location>
        <begin position="39"/>
        <end position="107"/>
    </location>
</feature>
<feature type="region of interest" description="Disordered" evidence="2">
    <location>
        <begin position="215"/>
        <end position="250"/>
    </location>
</feature>
<feature type="compositionally biased region" description="Basic and acidic residues" evidence="2">
    <location>
        <begin position="220"/>
        <end position="250"/>
    </location>
</feature>
<dbReference type="EMBL" id="CP000521">
    <property type="protein sequence ID" value="ABO13472.2"/>
    <property type="molecule type" value="Genomic_DNA"/>
</dbReference>
<dbReference type="SMR" id="A3M978"/>
<dbReference type="KEGG" id="acb:A1S_3075"/>
<dbReference type="HOGENOM" id="CLU_058591_0_2_6"/>
<dbReference type="GO" id="GO:0022627">
    <property type="term" value="C:cytosolic small ribosomal subunit"/>
    <property type="evidence" value="ECO:0007669"/>
    <property type="project" value="TreeGrafter"/>
</dbReference>
<dbReference type="GO" id="GO:0003729">
    <property type="term" value="F:mRNA binding"/>
    <property type="evidence" value="ECO:0007669"/>
    <property type="project" value="UniProtKB-UniRule"/>
</dbReference>
<dbReference type="GO" id="GO:0019843">
    <property type="term" value="F:rRNA binding"/>
    <property type="evidence" value="ECO:0007669"/>
    <property type="project" value="UniProtKB-UniRule"/>
</dbReference>
<dbReference type="GO" id="GO:0003735">
    <property type="term" value="F:structural constituent of ribosome"/>
    <property type="evidence" value="ECO:0007669"/>
    <property type="project" value="InterPro"/>
</dbReference>
<dbReference type="GO" id="GO:0006412">
    <property type="term" value="P:translation"/>
    <property type="evidence" value="ECO:0007669"/>
    <property type="project" value="UniProtKB-UniRule"/>
</dbReference>
<dbReference type="CDD" id="cd02412">
    <property type="entry name" value="KH-II_30S_S3"/>
    <property type="match status" value="1"/>
</dbReference>
<dbReference type="FunFam" id="3.30.1140.32:FF:000001">
    <property type="entry name" value="30S ribosomal protein S3"/>
    <property type="match status" value="1"/>
</dbReference>
<dbReference type="FunFam" id="3.30.300.20:FF:000001">
    <property type="entry name" value="30S ribosomal protein S3"/>
    <property type="match status" value="1"/>
</dbReference>
<dbReference type="Gene3D" id="3.30.300.20">
    <property type="match status" value="1"/>
</dbReference>
<dbReference type="Gene3D" id="3.30.1140.32">
    <property type="entry name" value="Ribosomal protein S3, C-terminal domain"/>
    <property type="match status" value="1"/>
</dbReference>
<dbReference type="HAMAP" id="MF_01309_B">
    <property type="entry name" value="Ribosomal_uS3_B"/>
    <property type="match status" value="1"/>
</dbReference>
<dbReference type="InterPro" id="IPR004087">
    <property type="entry name" value="KH_dom"/>
</dbReference>
<dbReference type="InterPro" id="IPR015946">
    <property type="entry name" value="KH_dom-like_a/b"/>
</dbReference>
<dbReference type="InterPro" id="IPR004044">
    <property type="entry name" value="KH_dom_type_2"/>
</dbReference>
<dbReference type="InterPro" id="IPR009019">
    <property type="entry name" value="KH_sf_prok-type"/>
</dbReference>
<dbReference type="InterPro" id="IPR036419">
    <property type="entry name" value="Ribosomal_S3_C_sf"/>
</dbReference>
<dbReference type="InterPro" id="IPR005704">
    <property type="entry name" value="Ribosomal_uS3_bac-typ"/>
</dbReference>
<dbReference type="InterPro" id="IPR001351">
    <property type="entry name" value="Ribosomal_uS3_C"/>
</dbReference>
<dbReference type="InterPro" id="IPR018280">
    <property type="entry name" value="Ribosomal_uS3_CS"/>
</dbReference>
<dbReference type="NCBIfam" id="TIGR01009">
    <property type="entry name" value="rpsC_bact"/>
    <property type="match status" value="1"/>
</dbReference>
<dbReference type="PANTHER" id="PTHR11760">
    <property type="entry name" value="30S/40S RIBOSOMAL PROTEIN S3"/>
    <property type="match status" value="1"/>
</dbReference>
<dbReference type="PANTHER" id="PTHR11760:SF19">
    <property type="entry name" value="SMALL RIBOSOMAL SUBUNIT PROTEIN US3C"/>
    <property type="match status" value="1"/>
</dbReference>
<dbReference type="Pfam" id="PF07650">
    <property type="entry name" value="KH_2"/>
    <property type="match status" value="1"/>
</dbReference>
<dbReference type="Pfam" id="PF00189">
    <property type="entry name" value="Ribosomal_S3_C"/>
    <property type="match status" value="1"/>
</dbReference>
<dbReference type="SMART" id="SM00322">
    <property type="entry name" value="KH"/>
    <property type="match status" value="1"/>
</dbReference>
<dbReference type="SUPFAM" id="SSF54814">
    <property type="entry name" value="Prokaryotic type KH domain (KH-domain type II)"/>
    <property type="match status" value="1"/>
</dbReference>
<dbReference type="SUPFAM" id="SSF54821">
    <property type="entry name" value="Ribosomal protein S3 C-terminal domain"/>
    <property type="match status" value="1"/>
</dbReference>
<dbReference type="PROSITE" id="PS50823">
    <property type="entry name" value="KH_TYPE_2"/>
    <property type="match status" value="1"/>
</dbReference>
<dbReference type="PROSITE" id="PS00548">
    <property type="entry name" value="RIBOSOMAL_S3"/>
    <property type="match status" value="1"/>
</dbReference>
<name>RS3_ACIBT</name>
<sequence>MGQKVHPIGIRLGVVKRHNANWYANPKQYAEYLLKDLQVREFLTKKLKNAMVSNILIERPSGAAKVTISTARPGIVIGKKGEDIEKLQRELTNIMGVPAQVSINEIDRPDLDARLVAEAIASQLEKRVMFRRAMKRAVQNTMRAGAKGIKVEVSGRLGGAEIARTEWYREGRVPLHTLRADIDYATMRAETTYGTIGVKVWIFRGEILGGMKQVMNPAPAEERPAKRGRGRGEGQERRGRRGDRAADKGE</sequence>
<comment type="function">
    <text evidence="1">Binds the lower part of the 30S subunit head. Binds mRNA in the 70S ribosome, positioning it for translation.</text>
</comment>
<comment type="subunit">
    <text evidence="1">Part of the 30S ribosomal subunit. Forms a tight complex with proteins S10 and S14.</text>
</comment>
<comment type="similarity">
    <text evidence="1">Belongs to the universal ribosomal protein uS3 family.</text>
</comment>
<evidence type="ECO:0000255" key="1">
    <source>
        <dbReference type="HAMAP-Rule" id="MF_01309"/>
    </source>
</evidence>
<evidence type="ECO:0000256" key="2">
    <source>
        <dbReference type="SAM" id="MobiDB-lite"/>
    </source>
</evidence>
<evidence type="ECO:0000305" key="3"/>
<keyword id="KW-0687">Ribonucleoprotein</keyword>
<keyword id="KW-0689">Ribosomal protein</keyword>
<keyword id="KW-0694">RNA-binding</keyword>
<keyword id="KW-0699">rRNA-binding</keyword>
<organism>
    <name type="scientific">Acinetobacter baumannii (strain ATCC 17978 / DSM 105126 / CIP 53.77 / LMG 1025 / NCDC KC755 / 5377)</name>
    <dbReference type="NCBI Taxonomy" id="400667"/>
    <lineage>
        <taxon>Bacteria</taxon>
        <taxon>Pseudomonadati</taxon>
        <taxon>Pseudomonadota</taxon>
        <taxon>Gammaproteobacteria</taxon>
        <taxon>Moraxellales</taxon>
        <taxon>Moraxellaceae</taxon>
        <taxon>Acinetobacter</taxon>
        <taxon>Acinetobacter calcoaceticus/baumannii complex</taxon>
    </lineage>
</organism>
<gene>
    <name evidence="1" type="primary">rpsC</name>
    <name type="ordered locus">A1S_3075</name>
</gene>
<reference key="1">
    <citation type="journal article" date="2007" name="Genes Dev.">
        <title>New insights into Acinetobacter baumannii pathogenesis revealed by high-density pyrosequencing and transposon mutagenesis.</title>
        <authorList>
            <person name="Smith M.G."/>
            <person name="Gianoulis T.A."/>
            <person name="Pukatzki S."/>
            <person name="Mekalanos J.J."/>
            <person name="Ornston L.N."/>
            <person name="Gerstein M."/>
            <person name="Snyder M."/>
        </authorList>
    </citation>
    <scope>NUCLEOTIDE SEQUENCE [LARGE SCALE GENOMIC DNA]</scope>
    <source>
        <strain>ATCC 17978 / DSM 105126 / CIP 53.77 / LMG 1025 / NCDC KC755 / 5377</strain>
    </source>
</reference>
<accession>A3M978</accession>